<keyword id="KW-0687">Ribonucleoprotein</keyword>
<keyword id="KW-0689">Ribosomal protein</keyword>
<name>RL27_FRATW</name>
<protein>
    <recommendedName>
        <fullName evidence="1">Large ribosomal subunit protein bL27</fullName>
    </recommendedName>
    <alternativeName>
        <fullName evidence="3">50S ribosomal protein L27</fullName>
    </alternativeName>
</protein>
<dbReference type="EMBL" id="CP000608">
    <property type="protein sequence ID" value="ABO47195.1"/>
    <property type="molecule type" value="Genomic_DNA"/>
</dbReference>
<dbReference type="RefSeq" id="WP_003020646.1">
    <property type="nucleotide sequence ID" value="NC_009257.1"/>
</dbReference>
<dbReference type="SMR" id="A4IZ44"/>
<dbReference type="GeneID" id="75263827"/>
<dbReference type="KEGG" id="ftw:FTW_1465"/>
<dbReference type="HOGENOM" id="CLU_095424_4_1_6"/>
<dbReference type="GO" id="GO:0022625">
    <property type="term" value="C:cytosolic large ribosomal subunit"/>
    <property type="evidence" value="ECO:0007669"/>
    <property type="project" value="TreeGrafter"/>
</dbReference>
<dbReference type="GO" id="GO:0003735">
    <property type="term" value="F:structural constituent of ribosome"/>
    <property type="evidence" value="ECO:0007669"/>
    <property type="project" value="InterPro"/>
</dbReference>
<dbReference type="GO" id="GO:0006412">
    <property type="term" value="P:translation"/>
    <property type="evidence" value="ECO:0007669"/>
    <property type="project" value="UniProtKB-UniRule"/>
</dbReference>
<dbReference type="FunFam" id="2.40.50.100:FF:000001">
    <property type="entry name" value="50S ribosomal protein L27"/>
    <property type="match status" value="1"/>
</dbReference>
<dbReference type="Gene3D" id="2.40.50.100">
    <property type="match status" value="1"/>
</dbReference>
<dbReference type="HAMAP" id="MF_00539">
    <property type="entry name" value="Ribosomal_bL27"/>
    <property type="match status" value="1"/>
</dbReference>
<dbReference type="InterPro" id="IPR001684">
    <property type="entry name" value="Ribosomal_bL27"/>
</dbReference>
<dbReference type="InterPro" id="IPR018261">
    <property type="entry name" value="Ribosomal_bL27_CS"/>
</dbReference>
<dbReference type="NCBIfam" id="TIGR00062">
    <property type="entry name" value="L27"/>
    <property type="match status" value="1"/>
</dbReference>
<dbReference type="PANTHER" id="PTHR15893:SF0">
    <property type="entry name" value="LARGE RIBOSOMAL SUBUNIT PROTEIN BL27M"/>
    <property type="match status" value="1"/>
</dbReference>
<dbReference type="PANTHER" id="PTHR15893">
    <property type="entry name" value="RIBOSOMAL PROTEIN L27"/>
    <property type="match status" value="1"/>
</dbReference>
<dbReference type="Pfam" id="PF01016">
    <property type="entry name" value="Ribosomal_L27"/>
    <property type="match status" value="1"/>
</dbReference>
<dbReference type="PRINTS" id="PR00063">
    <property type="entry name" value="RIBOSOMALL27"/>
</dbReference>
<dbReference type="SUPFAM" id="SSF110324">
    <property type="entry name" value="Ribosomal L27 protein-like"/>
    <property type="match status" value="1"/>
</dbReference>
<dbReference type="PROSITE" id="PS00831">
    <property type="entry name" value="RIBOSOMAL_L27"/>
    <property type="match status" value="1"/>
</dbReference>
<comment type="similarity">
    <text evidence="1">Belongs to the bacterial ribosomal protein bL27 family.</text>
</comment>
<proteinExistence type="inferred from homology"/>
<gene>
    <name evidence="1" type="primary">rpmA</name>
    <name type="ordered locus">FTW_1465</name>
</gene>
<accession>A4IZ44</accession>
<evidence type="ECO:0000255" key="1">
    <source>
        <dbReference type="HAMAP-Rule" id="MF_00539"/>
    </source>
</evidence>
<evidence type="ECO:0000256" key="2">
    <source>
        <dbReference type="SAM" id="MobiDB-lite"/>
    </source>
</evidence>
<evidence type="ECO:0000305" key="3"/>
<reference key="1">
    <citation type="journal article" date="2007" name="PLoS ONE">
        <title>Complete genomic characterization of a pathogenic A.II strain of Francisella tularensis subspecies tularensis.</title>
        <authorList>
            <person name="Beckstrom-Sternberg S.M."/>
            <person name="Auerbach R.K."/>
            <person name="Godbole S."/>
            <person name="Pearson J.V."/>
            <person name="Beckstrom-Sternberg J.S."/>
            <person name="Deng Z."/>
            <person name="Munk C."/>
            <person name="Kubota K."/>
            <person name="Zhou Y."/>
            <person name="Bruce D."/>
            <person name="Noronha J."/>
            <person name="Scheuermann R.H."/>
            <person name="Wang A."/>
            <person name="Wei X."/>
            <person name="Wang J."/>
            <person name="Hao J."/>
            <person name="Wagner D.M."/>
            <person name="Brettin T.S."/>
            <person name="Brown N."/>
            <person name="Gilna P."/>
            <person name="Keim P.S."/>
        </authorList>
    </citation>
    <scope>NUCLEOTIDE SEQUENCE [LARGE SCALE GENOMIC DNA]</scope>
    <source>
        <strain>WY96-3418</strain>
    </source>
</reference>
<organism>
    <name type="scientific">Francisella tularensis subsp. tularensis (strain WY96-3418)</name>
    <dbReference type="NCBI Taxonomy" id="418136"/>
    <lineage>
        <taxon>Bacteria</taxon>
        <taxon>Pseudomonadati</taxon>
        <taxon>Pseudomonadota</taxon>
        <taxon>Gammaproteobacteria</taxon>
        <taxon>Thiotrichales</taxon>
        <taxon>Francisellaceae</taxon>
        <taxon>Francisella</taxon>
    </lineage>
</organism>
<sequence length="84" mass="9069">MAHKKAGGSTRNGRDSNPKYLGVKRYGGEFVKAGTIIIRQRGTKTHPGVNVGCGKDHTLFALKDGTVKFHTGGALNRKFVSIEE</sequence>
<feature type="chain" id="PRO_1000017486" description="Large ribosomal subunit protein bL27">
    <location>
        <begin position="1"/>
        <end position="84"/>
    </location>
</feature>
<feature type="region of interest" description="Disordered" evidence="2">
    <location>
        <begin position="1"/>
        <end position="20"/>
    </location>
</feature>